<comment type="subcellular location">
    <subcellularLocation>
        <location evidence="1">Cell inner membrane</location>
        <topology evidence="1">Multi-pass membrane protein</topology>
    </subcellularLocation>
</comment>
<comment type="similarity">
    <text evidence="3">Belongs to the autoinducer-2 exporter (AI-2E) (TC 2.A.86) family.</text>
</comment>
<comment type="sequence caution" evidence="3">
    <conflict type="erroneous initiation">
        <sequence resource="EMBL-CDS" id="AAG58583"/>
    </conflict>
    <text>Extended N-terminus.</text>
</comment>
<proteinExistence type="inferred from homology"/>
<sequence length="349" mass="38522">METPQPDKTGMHILLKLASLVVILAGIHAAADIIVQLLLALFFAIVLNPLVTWFIRRGVQRPVAITIVVVVMLIALTALVGVLAASFNEFISMLPKFNKELTRKLFKLQEMLPFLNLHMSPERMLQRMDSEKVVTFTTALMTGLSGAMASVLLLVMTVVFMLFEVRHVPYKMRFALNNPQIHIAGLHRALKGVSHYLALKTLLSLWTGVIVWLGLELMGVQFALMWAVLAFLLNYVPNIGAVISAVPPMIQVLLFNGVYECILVGALFLVVHMVIGNILEPRMMGHRLGMSTMVVFLSLLIWGWLLGPVGMLLSVPLTSVCKIWMETTKGGSKLAILLGPGRPKSRLPG</sequence>
<protein>
    <recommendedName>
        <fullName>Putative transport protein YhhT</fullName>
    </recommendedName>
</protein>
<name>YHHT_ECO57</name>
<accession>P0AGM1</accession>
<accession>P37622</accession>
<accession>P76700</accession>
<accession>Q8X6P3</accession>
<organism>
    <name type="scientific">Escherichia coli O157:H7</name>
    <dbReference type="NCBI Taxonomy" id="83334"/>
    <lineage>
        <taxon>Bacteria</taxon>
        <taxon>Pseudomonadati</taxon>
        <taxon>Pseudomonadota</taxon>
        <taxon>Gammaproteobacteria</taxon>
        <taxon>Enterobacterales</taxon>
        <taxon>Enterobacteriaceae</taxon>
        <taxon>Escherichia</taxon>
    </lineage>
</organism>
<reference key="1">
    <citation type="journal article" date="2001" name="Nature">
        <title>Genome sequence of enterohaemorrhagic Escherichia coli O157:H7.</title>
        <authorList>
            <person name="Perna N.T."/>
            <person name="Plunkett G. III"/>
            <person name="Burland V."/>
            <person name="Mau B."/>
            <person name="Glasner J.D."/>
            <person name="Rose D.J."/>
            <person name="Mayhew G.F."/>
            <person name="Evans P.S."/>
            <person name="Gregor J."/>
            <person name="Kirkpatrick H.A."/>
            <person name="Posfai G."/>
            <person name="Hackett J."/>
            <person name="Klink S."/>
            <person name="Boutin A."/>
            <person name="Shao Y."/>
            <person name="Miller L."/>
            <person name="Grotbeck E.J."/>
            <person name="Davis N.W."/>
            <person name="Lim A."/>
            <person name="Dimalanta E.T."/>
            <person name="Potamousis K."/>
            <person name="Apodaca J."/>
            <person name="Anantharaman T.S."/>
            <person name="Lin J."/>
            <person name="Yen G."/>
            <person name="Schwartz D.C."/>
            <person name="Welch R.A."/>
            <person name="Blattner F.R."/>
        </authorList>
    </citation>
    <scope>NUCLEOTIDE SEQUENCE [LARGE SCALE GENOMIC DNA]</scope>
    <source>
        <strain>O157:H7 / EDL933 / ATCC 700927 / EHEC</strain>
    </source>
</reference>
<reference key="2">
    <citation type="journal article" date="2001" name="DNA Res.">
        <title>Complete genome sequence of enterohemorrhagic Escherichia coli O157:H7 and genomic comparison with a laboratory strain K-12.</title>
        <authorList>
            <person name="Hayashi T."/>
            <person name="Makino K."/>
            <person name="Ohnishi M."/>
            <person name="Kurokawa K."/>
            <person name="Ishii K."/>
            <person name="Yokoyama K."/>
            <person name="Han C.-G."/>
            <person name="Ohtsubo E."/>
            <person name="Nakayama K."/>
            <person name="Murata T."/>
            <person name="Tanaka M."/>
            <person name="Tobe T."/>
            <person name="Iida T."/>
            <person name="Takami H."/>
            <person name="Honda T."/>
            <person name="Sasakawa C."/>
            <person name="Ogasawara N."/>
            <person name="Yasunaga T."/>
            <person name="Kuhara S."/>
            <person name="Shiba T."/>
            <person name="Hattori M."/>
            <person name="Shinagawa H."/>
        </authorList>
    </citation>
    <scope>NUCLEOTIDE SEQUENCE [LARGE SCALE GENOMIC DNA]</scope>
    <source>
        <strain>O157:H7 / Sakai / RIMD 0509952 / EHEC</strain>
    </source>
</reference>
<evidence type="ECO:0000250" key="1"/>
<evidence type="ECO:0000255" key="2"/>
<evidence type="ECO:0000305" key="3"/>
<feature type="chain" id="PRO_0000148302" description="Putative transport protein YhhT">
    <location>
        <begin position="1"/>
        <end position="349"/>
    </location>
</feature>
<feature type="topological domain" description="Cytoplasmic" evidence="2">
    <location>
        <begin position="1"/>
        <end position="10"/>
    </location>
</feature>
<feature type="transmembrane region" description="Helical" evidence="2">
    <location>
        <begin position="11"/>
        <end position="31"/>
    </location>
</feature>
<feature type="topological domain" description="Periplasmic" evidence="2">
    <location>
        <position position="32"/>
    </location>
</feature>
<feature type="transmembrane region" description="Helical" evidence="2">
    <location>
        <begin position="33"/>
        <end position="53"/>
    </location>
</feature>
<feature type="topological domain" description="Cytoplasmic" evidence="2">
    <location>
        <begin position="54"/>
        <end position="62"/>
    </location>
</feature>
<feature type="transmembrane region" description="Helical" evidence="2">
    <location>
        <begin position="63"/>
        <end position="83"/>
    </location>
</feature>
<feature type="topological domain" description="Periplasmic" evidence="2">
    <location>
        <begin position="84"/>
        <end position="142"/>
    </location>
</feature>
<feature type="transmembrane region" description="Helical" evidence="2">
    <location>
        <begin position="143"/>
        <end position="163"/>
    </location>
</feature>
<feature type="topological domain" description="Cytoplasmic" evidence="2">
    <location>
        <begin position="164"/>
        <end position="208"/>
    </location>
</feature>
<feature type="transmembrane region" description="Helical" evidence="2">
    <location>
        <begin position="209"/>
        <end position="229"/>
    </location>
</feature>
<feature type="topological domain" description="Periplasmic" evidence="2">
    <location>
        <begin position="230"/>
        <end position="234"/>
    </location>
</feature>
<feature type="transmembrane region" description="Helical" evidence="2">
    <location>
        <begin position="235"/>
        <end position="255"/>
    </location>
</feature>
<feature type="topological domain" description="Cytoplasmic" evidence="2">
    <location>
        <begin position="256"/>
        <end position="257"/>
    </location>
</feature>
<feature type="transmembrane region" description="Helical" evidence="2">
    <location>
        <begin position="258"/>
        <end position="278"/>
    </location>
</feature>
<feature type="topological domain" description="Periplasmic" evidence="2">
    <location>
        <begin position="279"/>
        <end position="292"/>
    </location>
</feature>
<feature type="transmembrane region" description="Helical" evidence="2">
    <location>
        <begin position="293"/>
        <end position="313"/>
    </location>
</feature>
<feature type="topological domain" description="Cytoplasmic" evidence="2">
    <location>
        <begin position="314"/>
        <end position="349"/>
    </location>
</feature>
<keyword id="KW-0997">Cell inner membrane</keyword>
<keyword id="KW-1003">Cell membrane</keyword>
<keyword id="KW-0472">Membrane</keyword>
<keyword id="KW-1185">Reference proteome</keyword>
<keyword id="KW-0812">Transmembrane</keyword>
<keyword id="KW-1133">Transmembrane helix</keyword>
<keyword id="KW-0813">Transport</keyword>
<gene>
    <name type="primary">yhhT</name>
    <name type="ordered locus">Z4848</name>
    <name type="ordered locus">ECs4323</name>
</gene>
<dbReference type="EMBL" id="AE005174">
    <property type="protein sequence ID" value="AAG58583.1"/>
    <property type="status" value="ALT_INIT"/>
    <property type="molecule type" value="Genomic_DNA"/>
</dbReference>
<dbReference type="EMBL" id="BA000007">
    <property type="protein sequence ID" value="BAB37746.2"/>
    <property type="molecule type" value="Genomic_DNA"/>
</dbReference>
<dbReference type="RefSeq" id="NP_312350.2">
    <property type="nucleotide sequence ID" value="NC_002695.1"/>
</dbReference>
<dbReference type="RefSeq" id="WP_001300885.1">
    <property type="nucleotide sequence ID" value="NZ_VOAI01000004.1"/>
</dbReference>
<dbReference type="SMR" id="P0AGM1"/>
<dbReference type="STRING" id="155864.Z4848"/>
<dbReference type="GeneID" id="915819"/>
<dbReference type="KEGG" id="ece:Z4848"/>
<dbReference type="KEGG" id="ecs:ECs_4323"/>
<dbReference type="PATRIC" id="fig|386585.9.peg.4516"/>
<dbReference type="eggNOG" id="COG0628">
    <property type="taxonomic scope" value="Bacteria"/>
</dbReference>
<dbReference type="HOGENOM" id="CLU_031275_0_3_6"/>
<dbReference type="OMA" id="LNPIWIF"/>
<dbReference type="Proteomes" id="UP000000558">
    <property type="component" value="Chromosome"/>
</dbReference>
<dbReference type="Proteomes" id="UP000002519">
    <property type="component" value="Chromosome"/>
</dbReference>
<dbReference type="GO" id="GO:0005886">
    <property type="term" value="C:plasma membrane"/>
    <property type="evidence" value="ECO:0007669"/>
    <property type="project" value="UniProtKB-SubCell"/>
</dbReference>
<dbReference type="GO" id="GO:0055085">
    <property type="term" value="P:transmembrane transport"/>
    <property type="evidence" value="ECO:0007669"/>
    <property type="project" value="TreeGrafter"/>
</dbReference>
<dbReference type="InterPro" id="IPR002549">
    <property type="entry name" value="AI-2E-like"/>
</dbReference>
<dbReference type="NCBIfam" id="NF008930">
    <property type="entry name" value="PRK12287.1"/>
    <property type="match status" value="1"/>
</dbReference>
<dbReference type="PANTHER" id="PTHR21716">
    <property type="entry name" value="TRANSMEMBRANE PROTEIN"/>
    <property type="match status" value="1"/>
</dbReference>
<dbReference type="PANTHER" id="PTHR21716:SF21">
    <property type="entry name" value="TRANSPORT PROTEIN YHHT-RELATED"/>
    <property type="match status" value="1"/>
</dbReference>
<dbReference type="Pfam" id="PF01594">
    <property type="entry name" value="AI-2E_transport"/>
    <property type="match status" value="1"/>
</dbReference>